<accession>Q92M88</accession>
<reference key="1">
    <citation type="journal article" date="2001" name="Proc. Natl. Acad. Sci. U.S.A.">
        <title>Analysis of the chromosome sequence of the legume symbiont Sinorhizobium meliloti strain 1021.</title>
        <authorList>
            <person name="Capela D."/>
            <person name="Barloy-Hubler F."/>
            <person name="Gouzy J."/>
            <person name="Bothe G."/>
            <person name="Ampe F."/>
            <person name="Batut J."/>
            <person name="Boistard P."/>
            <person name="Becker A."/>
            <person name="Boutry M."/>
            <person name="Cadieu E."/>
            <person name="Dreano S."/>
            <person name="Gloux S."/>
            <person name="Godrie T."/>
            <person name="Goffeau A."/>
            <person name="Kahn D."/>
            <person name="Kiss E."/>
            <person name="Lelaure V."/>
            <person name="Masuy D."/>
            <person name="Pohl T."/>
            <person name="Portetelle D."/>
            <person name="Puehler A."/>
            <person name="Purnelle B."/>
            <person name="Ramsperger U."/>
            <person name="Renard C."/>
            <person name="Thebault P."/>
            <person name="Vandenbol M."/>
            <person name="Weidner S."/>
            <person name="Galibert F."/>
        </authorList>
    </citation>
    <scope>NUCLEOTIDE SEQUENCE [LARGE SCALE GENOMIC DNA]</scope>
    <source>
        <strain>1021</strain>
    </source>
</reference>
<reference key="2">
    <citation type="journal article" date="2001" name="Science">
        <title>The composite genome of the legume symbiont Sinorhizobium meliloti.</title>
        <authorList>
            <person name="Galibert F."/>
            <person name="Finan T.M."/>
            <person name="Long S.R."/>
            <person name="Puehler A."/>
            <person name="Abola P."/>
            <person name="Ampe F."/>
            <person name="Barloy-Hubler F."/>
            <person name="Barnett M.J."/>
            <person name="Becker A."/>
            <person name="Boistard P."/>
            <person name="Bothe G."/>
            <person name="Boutry M."/>
            <person name="Bowser L."/>
            <person name="Buhrmester J."/>
            <person name="Cadieu E."/>
            <person name="Capela D."/>
            <person name="Chain P."/>
            <person name="Cowie A."/>
            <person name="Davis R.W."/>
            <person name="Dreano S."/>
            <person name="Federspiel N.A."/>
            <person name="Fisher R.F."/>
            <person name="Gloux S."/>
            <person name="Godrie T."/>
            <person name="Goffeau A."/>
            <person name="Golding B."/>
            <person name="Gouzy J."/>
            <person name="Gurjal M."/>
            <person name="Hernandez-Lucas I."/>
            <person name="Hong A."/>
            <person name="Huizar L."/>
            <person name="Hyman R.W."/>
            <person name="Jones T."/>
            <person name="Kahn D."/>
            <person name="Kahn M.L."/>
            <person name="Kalman S."/>
            <person name="Keating D.H."/>
            <person name="Kiss E."/>
            <person name="Komp C."/>
            <person name="Lelaure V."/>
            <person name="Masuy D."/>
            <person name="Palm C."/>
            <person name="Peck M.C."/>
            <person name="Pohl T.M."/>
            <person name="Portetelle D."/>
            <person name="Purnelle B."/>
            <person name="Ramsperger U."/>
            <person name="Surzycki R."/>
            <person name="Thebault P."/>
            <person name="Vandenbol M."/>
            <person name="Vorhoelter F.J."/>
            <person name="Weidner S."/>
            <person name="Wells D.H."/>
            <person name="Wong K."/>
            <person name="Yeh K.-C."/>
            <person name="Batut J."/>
        </authorList>
    </citation>
    <scope>NUCLEOTIDE SEQUENCE [LARGE SCALE GENOMIC DNA]</scope>
    <source>
        <strain>1021</strain>
    </source>
</reference>
<keyword id="KW-0963">Cytoplasm</keyword>
<keyword id="KW-0238">DNA-binding</keyword>
<keyword id="KW-1185">Reference proteome</keyword>
<keyword id="KW-0804">Transcription</keyword>
<keyword id="KW-0805">Transcription regulation</keyword>
<dbReference type="EMBL" id="AL591688">
    <property type="protein sequence ID" value="CAC47332.1"/>
    <property type="molecule type" value="Genomic_DNA"/>
</dbReference>
<dbReference type="RefSeq" id="NP_386859.1">
    <property type="nucleotide sequence ID" value="NC_003047.1"/>
</dbReference>
<dbReference type="RefSeq" id="WP_010970171.1">
    <property type="nucleotide sequence ID" value="NC_003047.1"/>
</dbReference>
<dbReference type="SMR" id="Q92M88"/>
<dbReference type="EnsemblBacteria" id="CAC47332">
    <property type="protein sequence ID" value="CAC47332"/>
    <property type="gene ID" value="SMc03969"/>
</dbReference>
<dbReference type="KEGG" id="sme:SMc03969"/>
<dbReference type="PATRIC" id="fig|266834.11.peg.4262"/>
<dbReference type="eggNOG" id="COG0217">
    <property type="taxonomic scope" value="Bacteria"/>
</dbReference>
<dbReference type="HOGENOM" id="CLU_062974_2_2_5"/>
<dbReference type="OrthoDB" id="9781053at2"/>
<dbReference type="Proteomes" id="UP000001976">
    <property type="component" value="Chromosome"/>
</dbReference>
<dbReference type="GO" id="GO:0005829">
    <property type="term" value="C:cytosol"/>
    <property type="evidence" value="ECO:0007669"/>
    <property type="project" value="TreeGrafter"/>
</dbReference>
<dbReference type="GO" id="GO:0003677">
    <property type="term" value="F:DNA binding"/>
    <property type="evidence" value="ECO:0007669"/>
    <property type="project" value="UniProtKB-UniRule"/>
</dbReference>
<dbReference type="GO" id="GO:0006355">
    <property type="term" value="P:regulation of DNA-templated transcription"/>
    <property type="evidence" value="ECO:0007669"/>
    <property type="project" value="UniProtKB-UniRule"/>
</dbReference>
<dbReference type="FunFam" id="1.10.10.200:FF:000002">
    <property type="entry name" value="Probable transcriptional regulatory protein CLM62_37755"/>
    <property type="match status" value="1"/>
</dbReference>
<dbReference type="Gene3D" id="1.10.10.200">
    <property type="match status" value="1"/>
</dbReference>
<dbReference type="Gene3D" id="3.30.70.980">
    <property type="match status" value="2"/>
</dbReference>
<dbReference type="HAMAP" id="MF_00693">
    <property type="entry name" value="Transcrip_reg_TACO1"/>
    <property type="match status" value="1"/>
</dbReference>
<dbReference type="InterPro" id="IPR017856">
    <property type="entry name" value="Integrase-like_N"/>
</dbReference>
<dbReference type="InterPro" id="IPR048300">
    <property type="entry name" value="TACO1_YebC-like_2nd/3rd_dom"/>
</dbReference>
<dbReference type="InterPro" id="IPR049083">
    <property type="entry name" value="TACO1_YebC_N"/>
</dbReference>
<dbReference type="InterPro" id="IPR002876">
    <property type="entry name" value="Transcrip_reg_TACO1-like"/>
</dbReference>
<dbReference type="InterPro" id="IPR026564">
    <property type="entry name" value="Transcrip_reg_TACO1-like_dom3"/>
</dbReference>
<dbReference type="InterPro" id="IPR029072">
    <property type="entry name" value="YebC-like"/>
</dbReference>
<dbReference type="NCBIfam" id="NF001030">
    <property type="entry name" value="PRK00110.1"/>
    <property type="match status" value="1"/>
</dbReference>
<dbReference type="NCBIfam" id="NF009044">
    <property type="entry name" value="PRK12378.1"/>
    <property type="match status" value="1"/>
</dbReference>
<dbReference type="NCBIfam" id="TIGR01033">
    <property type="entry name" value="YebC/PmpR family DNA-binding transcriptional regulator"/>
    <property type="match status" value="1"/>
</dbReference>
<dbReference type="PANTHER" id="PTHR12532:SF6">
    <property type="entry name" value="TRANSCRIPTIONAL REGULATORY PROTEIN YEBC-RELATED"/>
    <property type="match status" value="1"/>
</dbReference>
<dbReference type="PANTHER" id="PTHR12532">
    <property type="entry name" value="TRANSLATIONAL ACTIVATOR OF CYTOCHROME C OXIDASE 1"/>
    <property type="match status" value="1"/>
</dbReference>
<dbReference type="Pfam" id="PF20772">
    <property type="entry name" value="TACO1_YebC_N"/>
    <property type="match status" value="1"/>
</dbReference>
<dbReference type="Pfam" id="PF01709">
    <property type="entry name" value="Transcrip_reg"/>
    <property type="match status" value="1"/>
</dbReference>
<dbReference type="SUPFAM" id="SSF75625">
    <property type="entry name" value="YebC-like"/>
    <property type="match status" value="1"/>
</dbReference>
<gene>
    <name type="ordered locus">R02753</name>
    <name type="ORF">SMc03969</name>
</gene>
<organism>
    <name type="scientific">Rhizobium meliloti (strain 1021)</name>
    <name type="common">Ensifer meliloti</name>
    <name type="synonym">Sinorhizobium meliloti</name>
    <dbReference type="NCBI Taxonomy" id="266834"/>
    <lineage>
        <taxon>Bacteria</taxon>
        <taxon>Pseudomonadati</taxon>
        <taxon>Pseudomonadota</taxon>
        <taxon>Alphaproteobacteria</taxon>
        <taxon>Hyphomicrobiales</taxon>
        <taxon>Rhizobiaceae</taxon>
        <taxon>Sinorhizobium/Ensifer group</taxon>
        <taxon>Sinorhizobium</taxon>
    </lineage>
</organism>
<feature type="chain" id="PRO_0000175875" description="Probable transcriptional regulatory protein R02753">
    <location>
        <begin position="1"/>
        <end position="248"/>
    </location>
</feature>
<name>Y2753_RHIME</name>
<evidence type="ECO:0000255" key="1">
    <source>
        <dbReference type="HAMAP-Rule" id="MF_00693"/>
    </source>
</evidence>
<proteinExistence type="inferred from homology"/>
<comment type="subcellular location">
    <subcellularLocation>
        <location evidence="1">Cytoplasm</location>
    </subcellularLocation>
</comment>
<comment type="similarity">
    <text evidence="1">Belongs to the TACO1 family.</text>
</comment>
<protein>
    <recommendedName>
        <fullName evidence="1">Probable transcriptional regulatory protein R02753</fullName>
    </recommendedName>
</protein>
<sequence>MAGHSQFKNIMHRKGRQDAVRSKMFSKLAREITVAAKTGLPDPTMNPRLRLAIQNAKAQSMPKDNIERAVKKAAGGDAENYEEVRYEGYGPGGVAVIVEALTDNRNRTASNVRSTFTKAGGALGETGSVSFSFDRVGEITYKLSAGDADKVMEAAIEAGADDVETDEEGHTITCGFEDIGEVSKALEGALGEAETVKAVWKPQNTVPVDEEKAQSLMKLIDNLEDDDDVQNVYSNFEVSDEVLAKLSA</sequence>